<accession>A3DA66</accession>
<dbReference type="EMBL" id="CP000563">
    <property type="protein sequence ID" value="ABN63629.1"/>
    <property type="molecule type" value="Genomic_DNA"/>
</dbReference>
<dbReference type="RefSeq" id="WP_006083594.1">
    <property type="nucleotide sequence ID" value="NC_009052.1"/>
</dbReference>
<dbReference type="SMR" id="A3DA66"/>
<dbReference type="STRING" id="325240.Sbal_4164"/>
<dbReference type="GeneID" id="11774508"/>
<dbReference type="KEGG" id="sbl:Sbal_4164"/>
<dbReference type="HOGENOM" id="CLU_058591_0_2_6"/>
<dbReference type="OrthoDB" id="9806396at2"/>
<dbReference type="Proteomes" id="UP000001557">
    <property type="component" value="Chromosome"/>
</dbReference>
<dbReference type="GO" id="GO:0022627">
    <property type="term" value="C:cytosolic small ribosomal subunit"/>
    <property type="evidence" value="ECO:0007669"/>
    <property type="project" value="TreeGrafter"/>
</dbReference>
<dbReference type="GO" id="GO:0003729">
    <property type="term" value="F:mRNA binding"/>
    <property type="evidence" value="ECO:0007669"/>
    <property type="project" value="UniProtKB-UniRule"/>
</dbReference>
<dbReference type="GO" id="GO:0019843">
    <property type="term" value="F:rRNA binding"/>
    <property type="evidence" value="ECO:0007669"/>
    <property type="project" value="UniProtKB-UniRule"/>
</dbReference>
<dbReference type="GO" id="GO:0003735">
    <property type="term" value="F:structural constituent of ribosome"/>
    <property type="evidence" value="ECO:0007669"/>
    <property type="project" value="InterPro"/>
</dbReference>
<dbReference type="GO" id="GO:0006412">
    <property type="term" value="P:translation"/>
    <property type="evidence" value="ECO:0007669"/>
    <property type="project" value="UniProtKB-UniRule"/>
</dbReference>
<dbReference type="CDD" id="cd02412">
    <property type="entry name" value="KH-II_30S_S3"/>
    <property type="match status" value="1"/>
</dbReference>
<dbReference type="FunFam" id="3.30.1140.32:FF:000001">
    <property type="entry name" value="30S ribosomal protein S3"/>
    <property type="match status" value="1"/>
</dbReference>
<dbReference type="FunFam" id="3.30.300.20:FF:000001">
    <property type="entry name" value="30S ribosomal protein S3"/>
    <property type="match status" value="1"/>
</dbReference>
<dbReference type="Gene3D" id="3.30.300.20">
    <property type="match status" value="1"/>
</dbReference>
<dbReference type="Gene3D" id="3.30.1140.32">
    <property type="entry name" value="Ribosomal protein S3, C-terminal domain"/>
    <property type="match status" value="1"/>
</dbReference>
<dbReference type="HAMAP" id="MF_01309_B">
    <property type="entry name" value="Ribosomal_uS3_B"/>
    <property type="match status" value="1"/>
</dbReference>
<dbReference type="InterPro" id="IPR004087">
    <property type="entry name" value="KH_dom"/>
</dbReference>
<dbReference type="InterPro" id="IPR015946">
    <property type="entry name" value="KH_dom-like_a/b"/>
</dbReference>
<dbReference type="InterPro" id="IPR004044">
    <property type="entry name" value="KH_dom_type_2"/>
</dbReference>
<dbReference type="InterPro" id="IPR009019">
    <property type="entry name" value="KH_sf_prok-type"/>
</dbReference>
<dbReference type="InterPro" id="IPR036419">
    <property type="entry name" value="Ribosomal_S3_C_sf"/>
</dbReference>
<dbReference type="InterPro" id="IPR005704">
    <property type="entry name" value="Ribosomal_uS3_bac-typ"/>
</dbReference>
<dbReference type="InterPro" id="IPR001351">
    <property type="entry name" value="Ribosomal_uS3_C"/>
</dbReference>
<dbReference type="InterPro" id="IPR018280">
    <property type="entry name" value="Ribosomal_uS3_CS"/>
</dbReference>
<dbReference type="NCBIfam" id="TIGR01009">
    <property type="entry name" value="rpsC_bact"/>
    <property type="match status" value="1"/>
</dbReference>
<dbReference type="PANTHER" id="PTHR11760">
    <property type="entry name" value="30S/40S RIBOSOMAL PROTEIN S3"/>
    <property type="match status" value="1"/>
</dbReference>
<dbReference type="PANTHER" id="PTHR11760:SF19">
    <property type="entry name" value="SMALL RIBOSOMAL SUBUNIT PROTEIN US3C"/>
    <property type="match status" value="1"/>
</dbReference>
<dbReference type="Pfam" id="PF07650">
    <property type="entry name" value="KH_2"/>
    <property type="match status" value="1"/>
</dbReference>
<dbReference type="Pfam" id="PF00189">
    <property type="entry name" value="Ribosomal_S3_C"/>
    <property type="match status" value="1"/>
</dbReference>
<dbReference type="SMART" id="SM00322">
    <property type="entry name" value="KH"/>
    <property type="match status" value="1"/>
</dbReference>
<dbReference type="SUPFAM" id="SSF54814">
    <property type="entry name" value="Prokaryotic type KH domain (KH-domain type II)"/>
    <property type="match status" value="1"/>
</dbReference>
<dbReference type="SUPFAM" id="SSF54821">
    <property type="entry name" value="Ribosomal protein S3 C-terminal domain"/>
    <property type="match status" value="1"/>
</dbReference>
<dbReference type="PROSITE" id="PS50823">
    <property type="entry name" value="KH_TYPE_2"/>
    <property type="match status" value="1"/>
</dbReference>
<dbReference type="PROSITE" id="PS00548">
    <property type="entry name" value="RIBOSOMAL_S3"/>
    <property type="match status" value="1"/>
</dbReference>
<organism>
    <name type="scientific">Shewanella baltica (strain OS155 / ATCC BAA-1091)</name>
    <dbReference type="NCBI Taxonomy" id="325240"/>
    <lineage>
        <taxon>Bacteria</taxon>
        <taxon>Pseudomonadati</taxon>
        <taxon>Pseudomonadota</taxon>
        <taxon>Gammaproteobacteria</taxon>
        <taxon>Alteromonadales</taxon>
        <taxon>Shewanellaceae</taxon>
        <taxon>Shewanella</taxon>
    </lineage>
</organism>
<evidence type="ECO:0000255" key="1">
    <source>
        <dbReference type="HAMAP-Rule" id="MF_01309"/>
    </source>
</evidence>
<evidence type="ECO:0000305" key="2"/>
<protein>
    <recommendedName>
        <fullName evidence="1">Small ribosomal subunit protein uS3</fullName>
    </recommendedName>
    <alternativeName>
        <fullName evidence="2">30S ribosomal protein S3</fullName>
    </alternativeName>
</protein>
<comment type="function">
    <text evidence="1">Binds the lower part of the 30S subunit head. Binds mRNA in the 70S ribosome, positioning it for translation.</text>
</comment>
<comment type="subunit">
    <text evidence="1">Part of the 30S ribosomal subunit. Forms a tight complex with proteins S10 and S14.</text>
</comment>
<comment type="similarity">
    <text evidence="1">Belongs to the universal ribosomal protein uS3 family.</text>
</comment>
<reference key="1">
    <citation type="submission" date="2007-02" db="EMBL/GenBank/DDBJ databases">
        <title>Complete sequence of chromosome of Shewanella baltica OS155.</title>
        <authorList>
            <consortium name="US DOE Joint Genome Institute"/>
            <person name="Copeland A."/>
            <person name="Lucas S."/>
            <person name="Lapidus A."/>
            <person name="Barry K."/>
            <person name="Detter J.C."/>
            <person name="Glavina del Rio T."/>
            <person name="Hammon N."/>
            <person name="Israni S."/>
            <person name="Dalin E."/>
            <person name="Tice H."/>
            <person name="Pitluck S."/>
            <person name="Sims D.R."/>
            <person name="Brettin T."/>
            <person name="Bruce D."/>
            <person name="Han C."/>
            <person name="Tapia R."/>
            <person name="Brainard J."/>
            <person name="Schmutz J."/>
            <person name="Larimer F."/>
            <person name="Land M."/>
            <person name="Hauser L."/>
            <person name="Kyrpides N."/>
            <person name="Mikhailova N."/>
            <person name="Brettar I."/>
            <person name="Klappenbach J."/>
            <person name="Konstantinidis K."/>
            <person name="Rodrigues J."/>
            <person name="Tiedje J."/>
            <person name="Richardson P."/>
        </authorList>
    </citation>
    <scope>NUCLEOTIDE SEQUENCE [LARGE SCALE GENOMIC DNA]</scope>
    <source>
        <strain>OS155 / ATCC BAA-1091</strain>
    </source>
</reference>
<sequence>MGQKVHPNGIRLGITKPWISTWYADKSDYASNLNSDWEVRKFLVEKLQAASVSKIVIERPAKSIRVTIHTARPGVVIGKKGEDVEVLRAAVSKLAGTPAQINIAEIRKPELDAKLVADSIAQQLERRVMFRRAMKRAVQNAMRIGAQGIKVQVSGRLGGAEIARDEWYREGRVPLHTLRADIDYSTSESHTQYGVIGVKVWIFKGEVLDGMLPQIEEPKQQQPKRKPRGK</sequence>
<proteinExistence type="inferred from homology"/>
<feature type="chain" id="PRO_1000086157" description="Small ribosomal subunit protein uS3">
    <location>
        <begin position="1"/>
        <end position="230"/>
    </location>
</feature>
<feature type="domain" description="KH type-2" evidence="1">
    <location>
        <begin position="39"/>
        <end position="107"/>
    </location>
</feature>
<gene>
    <name evidence="1" type="primary">rpsC</name>
    <name type="ordered locus">Sbal_4164</name>
</gene>
<keyword id="KW-1185">Reference proteome</keyword>
<keyword id="KW-0687">Ribonucleoprotein</keyword>
<keyword id="KW-0689">Ribosomal protein</keyword>
<keyword id="KW-0694">RNA-binding</keyword>
<keyword id="KW-0699">rRNA-binding</keyword>
<name>RS3_SHEB5</name>